<name>NUOB_AERS4</name>
<feature type="chain" id="PRO_0000376112" description="NADH-quinone oxidoreductase subunit B">
    <location>
        <begin position="1"/>
        <end position="224"/>
    </location>
</feature>
<feature type="region of interest" description="Disordered" evidence="2">
    <location>
        <begin position="200"/>
        <end position="224"/>
    </location>
</feature>
<feature type="compositionally biased region" description="Basic and acidic residues" evidence="2">
    <location>
        <begin position="201"/>
        <end position="224"/>
    </location>
</feature>
<feature type="binding site" evidence="1">
    <location>
        <position position="67"/>
    </location>
    <ligand>
        <name>[4Fe-4S] cluster</name>
        <dbReference type="ChEBI" id="CHEBI:49883"/>
    </ligand>
</feature>
<feature type="binding site" evidence="1">
    <location>
        <position position="68"/>
    </location>
    <ligand>
        <name>[4Fe-4S] cluster</name>
        <dbReference type="ChEBI" id="CHEBI:49883"/>
    </ligand>
</feature>
<feature type="binding site" evidence="1">
    <location>
        <position position="133"/>
    </location>
    <ligand>
        <name>[4Fe-4S] cluster</name>
        <dbReference type="ChEBI" id="CHEBI:49883"/>
    </ligand>
</feature>
<feature type="binding site" evidence="1">
    <location>
        <position position="162"/>
    </location>
    <ligand>
        <name>[4Fe-4S] cluster</name>
        <dbReference type="ChEBI" id="CHEBI:49883"/>
    </ligand>
</feature>
<gene>
    <name evidence="1" type="primary">nuoB</name>
    <name type="ordered locus">ASA_1735</name>
</gene>
<reference key="1">
    <citation type="journal article" date="2008" name="BMC Genomics">
        <title>The genome of Aeromonas salmonicida subsp. salmonicida A449: insights into the evolution of a fish pathogen.</title>
        <authorList>
            <person name="Reith M.E."/>
            <person name="Singh R.K."/>
            <person name="Curtis B."/>
            <person name="Boyd J.M."/>
            <person name="Bouevitch A."/>
            <person name="Kimball J."/>
            <person name="Munholland J."/>
            <person name="Murphy C."/>
            <person name="Sarty D."/>
            <person name="Williams J."/>
            <person name="Nash J.H."/>
            <person name="Johnson S.C."/>
            <person name="Brown L.L."/>
        </authorList>
    </citation>
    <scope>NUCLEOTIDE SEQUENCE [LARGE SCALE GENOMIC DNA]</scope>
    <source>
        <strain>A449</strain>
    </source>
</reference>
<dbReference type="EC" id="7.1.1.-" evidence="1"/>
<dbReference type="EMBL" id="CP000644">
    <property type="protein sequence ID" value="ABO89815.1"/>
    <property type="molecule type" value="Genomic_DNA"/>
</dbReference>
<dbReference type="RefSeq" id="WP_005314925.1">
    <property type="nucleotide sequence ID" value="NC_009348.1"/>
</dbReference>
<dbReference type="SMR" id="A4SLP3"/>
<dbReference type="STRING" id="29491.GCA_000820065_02205"/>
<dbReference type="KEGG" id="asa:ASA_1735"/>
<dbReference type="eggNOG" id="COG0377">
    <property type="taxonomic scope" value="Bacteria"/>
</dbReference>
<dbReference type="HOGENOM" id="CLU_055737_7_3_6"/>
<dbReference type="Proteomes" id="UP000000225">
    <property type="component" value="Chromosome"/>
</dbReference>
<dbReference type="GO" id="GO:0005886">
    <property type="term" value="C:plasma membrane"/>
    <property type="evidence" value="ECO:0007669"/>
    <property type="project" value="UniProtKB-SubCell"/>
</dbReference>
<dbReference type="GO" id="GO:0045271">
    <property type="term" value="C:respiratory chain complex I"/>
    <property type="evidence" value="ECO:0007669"/>
    <property type="project" value="TreeGrafter"/>
</dbReference>
<dbReference type="GO" id="GO:0051539">
    <property type="term" value="F:4 iron, 4 sulfur cluster binding"/>
    <property type="evidence" value="ECO:0007669"/>
    <property type="project" value="UniProtKB-KW"/>
</dbReference>
<dbReference type="GO" id="GO:0005506">
    <property type="term" value="F:iron ion binding"/>
    <property type="evidence" value="ECO:0007669"/>
    <property type="project" value="UniProtKB-UniRule"/>
</dbReference>
<dbReference type="GO" id="GO:0008137">
    <property type="term" value="F:NADH dehydrogenase (ubiquinone) activity"/>
    <property type="evidence" value="ECO:0007669"/>
    <property type="project" value="InterPro"/>
</dbReference>
<dbReference type="GO" id="GO:0050136">
    <property type="term" value="F:NADH:ubiquinone reductase (non-electrogenic) activity"/>
    <property type="evidence" value="ECO:0007669"/>
    <property type="project" value="UniProtKB-UniRule"/>
</dbReference>
<dbReference type="GO" id="GO:0048038">
    <property type="term" value="F:quinone binding"/>
    <property type="evidence" value="ECO:0007669"/>
    <property type="project" value="UniProtKB-KW"/>
</dbReference>
<dbReference type="GO" id="GO:0009060">
    <property type="term" value="P:aerobic respiration"/>
    <property type="evidence" value="ECO:0007669"/>
    <property type="project" value="TreeGrafter"/>
</dbReference>
<dbReference type="GO" id="GO:0015990">
    <property type="term" value="P:electron transport coupled proton transport"/>
    <property type="evidence" value="ECO:0007669"/>
    <property type="project" value="TreeGrafter"/>
</dbReference>
<dbReference type="FunFam" id="3.40.50.12280:FF:000002">
    <property type="entry name" value="NADH-quinone oxidoreductase subunit B"/>
    <property type="match status" value="1"/>
</dbReference>
<dbReference type="Gene3D" id="3.40.50.12280">
    <property type="match status" value="1"/>
</dbReference>
<dbReference type="HAMAP" id="MF_01356">
    <property type="entry name" value="NDH1_NuoB"/>
    <property type="match status" value="1"/>
</dbReference>
<dbReference type="InterPro" id="IPR006137">
    <property type="entry name" value="NADH_UbQ_OxRdtase-like_20kDa"/>
</dbReference>
<dbReference type="InterPro" id="IPR006138">
    <property type="entry name" value="NADH_UQ_OxRdtase_20Kd_su"/>
</dbReference>
<dbReference type="NCBIfam" id="TIGR01957">
    <property type="entry name" value="nuoB_fam"/>
    <property type="match status" value="1"/>
</dbReference>
<dbReference type="NCBIfam" id="NF005012">
    <property type="entry name" value="PRK06411.1"/>
    <property type="match status" value="1"/>
</dbReference>
<dbReference type="PANTHER" id="PTHR11995">
    <property type="entry name" value="NADH DEHYDROGENASE"/>
    <property type="match status" value="1"/>
</dbReference>
<dbReference type="PANTHER" id="PTHR11995:SF14">
    <property type="entry name" value="NADH DEHYDROGENASE [UBIQUINONE] IRON-SULFUR PROTEIN 7, MITOCHONDRIAL"/>
    <property type="match status" value="1"/>
</dbReference>
<dbReference type="Pfam" id="PF01058">
    <property type="entry name" value="Oxidored_q6"/>
    <property type="match status" value="1"/>
</dbReference>
<dbReference type="SUPFAM" id="SSF56770">
    <property type="entry name" value="HydA/Nqo6-like"/>
    <property type="match status" value="1"/>
</dbReference>
<dbReference type="PROSITE" id="PS01150">
    <property type="entry name" value="COMPLEX1_20K"/>
    <property type="match status" value="1"/>
</dbReference>
<protein>
    <recommendedName>
        <fullName evidence="1">NADH-quinone oxidoreductase subunit B</fullName>
        <ecNumber evidence="1">7.1.1.-</ecNumber>
    </recommendedName>
    <alternativeName>
        <fullName evidence="1">NADH dehydrogenase I subunit B</fullName>
    </alternativeName>
    <alternativeName>
        <fullName evidence="1">NDH-1 subunit B</fullName>
    </alternativeName>
</protein>
<proteinExistence type="inferred from homology"/>
<keyword id="KW-0004">4Fe-4S</keyword>
<keyword id="KW-0997">Cell inner membrane</keyword>
<keyword id="KW-1003">Cell membrane</keyword>
<keyword id="KW-0408">Iron</keyword>
<keyword id="KW-0411">Iron-sulfur</keyword>
<keyword id="KW-0472">Membrane</keyword>
<keyword id="KW-0479">Metal-binding</keyword>
<keyword id="KW-0520">NAD</keyword>
<keyword id="KW-0874">Quinone</keyword>
<keyword id="KW-1278">Translocase</keyword>
<keyword id="KW-0813">Transport</keyword>
<keyword id="KW-0830">Ubiquinone</keyword>
<evidence type="ECO:0000255" key="1">
    <source>
        <dbReference type="HAMAP-Rule" id="MF_01356"/>
    </source>
</evidence>
<evidence type="ECO:0000256" key="2">
    <source>
        <dbReference type="SAM" id="MobiDB-lite"/>
    </source>
</evidence>
<comment type="function">
    <text evidence="1">NDH-1 shuttles electrons from NADH, via FMN and iron-sulfur (Fe-S) centers, to quinones in the respiratory chain. The immediate electron acceptor for the enzyme in this species is believed to be ubiquinone. Couples the redox reaction to proton translocation (for every two electrons transferred, four hydrogen ions are translocated across the cytoplasmic membrane), and thus conserves the redox energy in a proton gradient.</text>
</comment>
<comment type="catalytic activity">
    <reaction evidence="1">
        <text>a quinone + NADH + 5 H(+)(in) = a quinol + NAD(+) + 4 H(+)(out)</text>
        <dbReference type="Rhea" id="RHEA:57888"/>
        <dbReference type="ChEBI" id="CHEBI:15378"/>
        <dbReference type="ChEBI" id="CHEBI:24646"/>
        <dbReference type="ChEBI" id="CHEBI:57540"/>
        <dbReference type="ChEBI" id="CHEBI:57945"/>
        <dbReference type="ChEBI" id="CHEBI:132124"/>
    </reaction>
</comment>
<comment type="cofactor">
    <cofactor evidence="1">
        <name>[4Fe-4S] cluster</name>
        <dbReference type="ChEBI" id="CHEBI:49883"/>
    </cofactor>
    <text evidence="1">Binds 1 [4Fe-4S] cluster.</text>
</comment>
<comment type="subunit">
    <text evidence="1">NDH-1 is composed of 14 different subunits. Subunits NuoB, C, D, E, F, and G constitute the peripheral sector of the complex.</text>
</comment>
<comment type="subcellular location">
    <subcellularLocation>
        <location evidence="1">Cell inner membrane</location>
        <topology evidence="1">Peripheral membrane protein</topology>
        <orientation evidence="1">Cytoplasmic side</orientation>
    </subcellularLocation>
</comment>
<comment type="similarity">
    <text evidence="1">Belongs to the complex I 20 kDa subunit family.</text>
</comment>
<organism>
    <name type="scientific">Aeromonas salmonicida (strain A449)</name>
    <dbReference type="NCBI Taxonomy" id="382245"/>
    <lineage>
        <taxon>Bacteria</taxon>
        <taxon>Pseudomonadati</taxon>
        <taxon>Pseudomonadota</taxon>
        <taxon>Gammaproteobacteria</taxon>
        <taxon>Aeromonadales</taxon>
        <taxon>Aeromonadaceae</taxon>
        <taxon>Aeromonas</taxon>
    </lineage>
</organism>
<accession>A4SLP3</accession>
<sequence>MKYTLTRIDPDAPVERYPQEQSQTVDDPLAQDATRGIMMGRLEEVLQDTVNWGRKNSLWPYNFGISCCYVEMCTAFTSPHDVARFGAEVIRASPRQADFMVIAGTPFIKMAPVIQRLYEQLLEPKWVISMGACANSGGMYDIYSVVQGVDKFLPVDVYIPGCPPRPEAFLQALMLLQDSIGKERRPLSWVVGDQGIYRPDMPAEKDRKRGERIKVTNLRTPDEI</sequence>